<keyword id="KW-0028">Amino-acid biosynthesis</keyword>
<keyword id="KW-0057">Aromatic amino acid biosynthesis</keyword>
<keyword id="KW-0328">Glycosyltransferase</keyword>
<keyword id="KW-0460">Magnesium</keyword>
<keyword id="KW-0479">Metal-binding</keyword>
<keyword id="KW-0808">Transferase</keyword>
<keyword id="KW-0822">Tryptophan biosynthesis</keyword>
<accession>B1I7T0</accession>
<protein>
    <recommendedName>
        <fullName evidence="1">Anthranilate phosphoribosyltransferase</fullName>
        <ecNumber evidence="1">2.4.2.18</ecNumber>
    </recommendedName>
</protein>
<sequence>MKEIIEKLAKFENLSGVEMTDVIERIVTGRVTEAQIASLLLALKMKGETPEERTAIAQVMRGHAQHIPTEIHDAMDNCGTGGDKSFSFNISTTAAFVLAGGGIHMAKHGNRSISSKSGSADVLEALGINLDLKPAELGKVFDKTGIVFLFAKNMHPAMKYIMPARLELGIPTIMNLTGPLIHPMALETQLLGISRPELLESTAQVLKNMGRKRAIVVAGPEGLDEAGLNGTTKIALLENGEISLSSFTPEDLGMEGYAMEDIRGGNAQENAEILLSVLKNEASPFLETTVLNAGLGFYANGKIDSIKEGVALARQVIARGKALEKLRLLQEYQK</sequence>
<comment type="function">
    <text evidence="1">Catalyzes the transfer of the phosphoribosyl group of 5-phosphorylribose-1-pyrophosphate (PRPP) to anthranilate to yield N-(5'-phosphoribosyl)-anthranilate (PRA).</text>
</comment>
<comment type="catalytic activity">
    <reaction evidence="1">
        <text>N-(5-phospho-beta-D-ribosyl)anthranilate + diphosphate = 5-phospho-alpha-D-ribose 1-diphosphate + anthranilate</text>
        <dbReference type="Rhea" id="RHEA:11768"/>
        <dbReference type="ChEBI" id="CHEBI:16567"/>
        <dbReference type="ChEBI" id="CHEBI:18277"/>
        <dbReference type="ChEBI" id="CHEBI:33019"/>
        <dbReference type="ChEBI" id="CHEBI:58017"/>
        <dbReference type="EC" id="2.4.2.18"/>
    </reaction>
</comment>
<comment type="cofactor">
    <cofactor evidence="1">
        <name>Mg(2+)</name>
        <dbReference type="ChEBI" id="CHEBI:18420"/>
    </cofactor>
    <text evidence="1">Binds 2 magnesium ions per monomer.</text>
</comment>
<comment type="pathway">
    <text evidence="1">Amino-acid biosynthesis; L-tryptophan biosynthesis; L-tryptophan from chorismate: step 2/5.</text>
</comment>
<comment type="subunit">
    <text evidence="1">Homodimer.</text>
</comment>
<comment type="similarity">
    <text evidence="1">Belongs to the anthranilate phosphoribosyltransferase family.</text>
</comment>
<reference key="1">
    <citation type="journal article" date="2010" name="Genome Biol.">
        <title>Structure and dynamics of the pan-genome of Streptococcus pneumoniae and closely related species.</title>
        <authorList>
            <person name="Donati C."/>
            <person name="Hiller N.L."/>
            <person name="Tettelin H."/>
            <person name="Muzzi A."/>
            <person name="Croucher N.J."/>
            <person name="Angiuoli S.V."/>
            <person name="Oggioni M."/>
            <person name="Dunning Hotopp J.C."/>
            <person name="Hu F.Z."/>
            <person name="Riley D.R."/>
            <person name="Covacci A."/>
            <person name="Mitchell T.J."/>
            <person name="Bentley S.D."/>
            <person name="Kilian M."/>
            <person name="Ehrlich G.D."/>
            <person name="Rappuoli R."/>
            <person name="Moxon E.R."/>
            <person name="Masignani V."/>
        </authorList>
    </citation>
    <scope>NUCLEOTIDE SEQUENCE [LARGE SCALE GENOMIC DNA]</scope>
    <source>
        <strain>Hungary19A-6</strain>
    </source>
</reference>
<gene>
    <name evidence="1" type="primary">trpD</name>
    <name type="ordered locus">SPH_1937</name>
</gene>
<organism>
    <name type="scientific">Streptococcus pneumoniae (strain Hungary19A-6)</name>
    <dbReference type="NCBI Taxonomy" id="487214"/>
    <lineage>
        <taxon>Bacteria</taxon>
        <taxon>Bacillati</taxon>
        <taxon>Bacillota</taxon>
        <taxon>Bacilli</taxon>
        <taxon>Lactobacillales</taxon>
        <taxon>Streptococcaceae</taxon>
        <taxon>Streptococcus</taxon>
    </lineage>
</organism>
<feature type="chain" id="PRO_1000099850" description="Anthranilate phosphoribosyltransferase">
    <location>
        <begin position="1"/>
        <end position="334"/>
    </location>
</feature>
<feature type="binding site" evidence="1">
    <location>
        <position position="79"/>
    </location>
    <ligand>
        <name>5-phospho-alpha-D-ribose 1-diphosphate</name>
        <dbReference type="ChEBI" id="CHEBI:58017"/>
    </ligand>
</feature>
<feature type="binding site" evidence="1">
    <location>
        <position position="79"/>
    </location>
    <ligand>
        <name>anthranilate</name>
        <dbReference type="ChEBI" id="CHEBI:16567"/>
        <label>1</label>
    </ligand>
</feature>
<feature type="binding site" evidence="1">
    <location>
        <begin position="82"/>
        <end position="83"/>
    </location>
    <ligand>
        <name>5-phospho-alpha-D-ribose 1-diphosphate</name>
        <dbReference type="ChEBI" id="CHEBI:58017"/>
    </ligand>
</feature>
<feature type="binding site" evidence="1">
    <location>
        <position position="87"/>
    </location>
    <ligand>
        <name>5-phospho-alpha-D-ribose 1-diphosphate</name>
        <dbReference type="ChEBI" id="CHEBI:58017"/>
    </ligand>
</feature>
<feature type="binding site" evidence="1">
    <location>
        <begin position="89"/>
        <end position="92"/>
    </location>
    <ligand>
        <name>5-phospho-alpha-D-ribose 1-diphosphate</name>
        <dbReference type="ChEBI" id="CHEBI:58017"/>
    </ligand>
</feature>
<feature type="binding site" evidence="1">
    <location>
        <position position="91"/>
    </location>
    <ligand>
        <name>Mg(2+)</name>
        <dbReference type="ChEBI" id="CHEBI:18420"/>
        <label>1</label>
    </ligand>
</feature>
<feature type="binding site" evidence="1">
    <location>
        <begin position="107"/>
        <end position="115"/>
    </location>
    <ligand>
        <name>5-phospho-alpha-D-ribose 1-diphosphate</name>
        <dbReference type="ChEBI" id="CHEBI:58017"/>
    </ligand>
</feature>
<feature type="binding site" evidence="1">
    <location>
        <position position="110"/>
    </location>
    <ligand>
        <name>anthranilate</name>
        <dbReference type="ChEBI" id="CHEBI:16567"/>
        <label>1</label>
    </ligand>
</feature>
<feature type="binding site" evidence="1">
    <location>
        <position position="119"/>
    </location>
    <ligand>
        <name>5-phospho-alpha-D-ribose 1-diphosphate</name>
        <dbReference type="ChEBI" id="CHEBI:58017"/>
    </ligand>
</feature>
<feature type="binding site" evidence="1">
    <location>
        <position position="165"/>
    </location>
    <ligand>
        <name>anthranilate</name>
        <dbReference type="ChEBI" id="CHEBI:16567"/>
        <label>2</label>
    </ligand>
</feature>
<feature type="binding site" evidence="1">
    <location>
        <position position="224"/>
    </location>
    <ligand>
        <name>Mg(2+)</name>
        <dbReference type="ChEBI" id="CHEBI:18420"/>
        <label>2</label>
    </ligand>
</feature>
<feature type="binding site" evidence="1">
    <location>
        <position position="225"/>
    </location>
    <ligand>
        <name>Mg(2+)</name>
        <dbReference type="ChEBI" id="CHEBI:18420"/>
        <label>1</label>
    </ligand>
</feature>
<feature type="binding site" evidence="1">
    <location>
        <position position="225"/>
    </location>
    <ligand>
        <name>Mg(2+)</name>
        <dbReference type="ChEBI" id="CHEBI:18420"/>
        <label>2</label>
    </ligand>
</feature>
<proteinExistence type="inferred from homology"/>
<name>TRPD_STRPI</name>
<evidence type="ECO:0000255" key="1">
    <source>
        <dbReference type="HAMAP-Rule" id="MF_00211"/>
    </source>
</evidence>
<dbReference type="EC" id="2.4.2.18" evidence="1"/>
<dbReference type="EMBL" id="CP000936">
    <property type="protein sequence ID" value="ACA36850.1"/>
    <property type="molecule type" value="Genomic_DNA"/>
</dbReference>
<dbReference type="RefSeq" id="WP_000658684.1">
    <property type="nucleotide sequence ID" value="NC_010380.1"/>
</dbReference>
<dbReference type="SMR" id="B1I7T0"/>
<dbReference type="GeneID" id="45652966"/>
<dbReference type="KEGG" id="spv:SPH_1937"/>
<dbReference type="HOGENOM" id="CLU_034315_2_1_9"/>
<dbReference type="UniPathway" id="UPA00035">
    <property type="reaction ID" value="UER00041"/>
</dbReference>
<dbReference type="Proteomes" id="UP000002163">
    <property type="component" value="Chromosome"/>
</dbReference>
<dbReference type="GO" id="GO:0005829">
    <property type="term" value="C:cytosol"/>
    <property type="evidence" value="ECO:0007669"/>
    <property type="project" value="TreeGrafter"/>
</dbReference>
<dbReference type="GO" id="GO:0004048">
    <property type="term" value="F:anthranilate phosphoribosyltransferase activity"/>
    <property type="evidence" value="ECO:0007669"/>
    <property type="project" value="UniProtKB-UniRule"/>
</dbReference>
<dbReference type="GO" id="GO:0000287">
    <property type="term" value="F:magnesium ion binding"/>
    <property type="evidence" value="ECO:0007669"/>
    <property type="project" value="UniProtKB-UniRule"/>
</dbReference>
<dbReference type="GO" id="GO:0000162">
    <property type="term" value="P:L-tryptophan biosynthetic process"/>
    <property type="evidence" value="ECO:0007669"/>
    <property type="project" value="UniProtKB-UniRule"/>
</dbReference>
<dbReference type="FunFam" id="3.40.1030.10:FF:000002">
    <property type="entry name" value="Anthranilate phosphoribosyltransferase"/>
    <property type="match status" value="1"/>
</dbReference>
<dbReference type="Gene3D" id="3.40.1030.10">
    <property type="entry name" value="Nucleoside phosphorylase/phosphoribosyltransferase catalytic domain"/>
    <property type="match status" value="1"/>
</dbReference>
<dbReference type="Gene3D" id="1.20.970.10">
    <property type="entry name" value="Transferase, Pyrimidine Nucleoside Phosphorylase, Chain C"/>
    <property type="match status" value="1"/>
</dbReference>
<dbReference type="HAMAP" id="MF_00211">
    <property type="entry name" value="TrpD"/>
    <property type="match status" value="1"/>
</dbReference>
<dbReference type="InterPro" id="IPR005940">
    <property type="entry name" value="Anthranilate_Pribosyl_Tfrase"/>
</dbReference>
<dbReference type="InterPro" id="IPR000312">
    <property type="entry name" value="Glycosyl_Trfase_fam3"/>
</dbReference>
<dbReference type="InterPro" id="IPR017459">
    <property type="entry name" value="Glycosyl_Trfase_fam3_N_dom"/>
</dbReference>
<dbReference type="InterPro" id="IPR036320">
    <property type="entry name" value="Glycosyl_Trfase_fam3_N_dom_sf"/>
</dbReference>
<dbReference type="InterPro" id="IPR035902">
    <property type="entry name" value="Nuc_phospho_transferase"/>
</dbReference>
<dbReference type="NCBIfam" id="TIGR01245">
    <property type="entry name" value="trpD"/>
    <property type="match status" value="1"/>
</dbReference>
<dbReference type="PANTHER" id="PTHR43285">
    <property type="entry name" value="ANTHRANILATE PHOSPHORIBOSYLTRANSFERASE"/>
    <property type="match status" value="1"/>
</dbReference>
<dbReference type="PANTHER" id="PTHR43285:SF2">
    <property type="entry name" value="ANTHRANILATE PHOSPHORIBOSYLTRANSFERASE"/>
    <property type="match status" value="1"/>
</dbReference>
<dbReference type="Pfam" id="PF02885">
    <property type="entry name" value="Glycos_trans_3N"/>
    <property type="match status" value="1"/>
</dbReference>
<dbReference type="Pfam" id="PF00591">
    <property type="entry name" value="Glycos_transf_3"/>
    <property type="match status" value="1"/>
</dbReference>
<dbReference type="SUPFAM" id="SSF52418">
    <property type="entry name" value="Nucleoside phosphorylase/phosphoribosyltransferase catalytic domain"/>
    <property type="match status" value="1"/>
</dbReference>
<dbReference type="SUPFAM" id="SSF47648">
    <property type="entry name" value="Nucleoside phosphorylase/phosphoribosyltransferase N-terminal domain"/>
    <property type="match status" value="1"/>
</dbReference>